<gene>
    <name type="primary">Acbd6</name>
</gene>
<sequence>MATPFLPAGATTGDSGGELSSGDDSGDLESFQTPEAEATRSLAELFEKAAAHVQGLVQVASREQLLYLYARYKQVKVGNCNIPKPNFFDFEGKQKWEAWKALGDSSPSQAMQEYIAAVKKLDPGWNPQVSEKKGKEGSSGFGGPVVSSLYHEETIREEDKNIFDYCRENNIDHITKAIKSKTVDVNMTDEEGRALLHWACDRGHKELVKVLLQCEAGINCQDNEGQTALHYAAACEFSDIVELLLQSGADPTLRDQDGCLPEEVTGCKAVSLVLQLHRAGKA</sequence>
<name>ACBD6_RAT</name>
<comment type="function">
    <text evidence="2">Binds long-chain acyl-coenzyme A molecules with a strong preference for unsaturated C18:1-CoA, lower affinity for unsaturated C20:4-CoA, and very weak affinity for saturated C16:0-CoA. Does not bind fatty acids (By similarity). Plays a role in protein N-myristoylation (By similarity).</text>
</comment>
<comment type="subunit">
    <text evidence="2">Monomer.</text>
</comment>
<comment type="subcellular location">
    <subcellularLocation>
        <location evidence="2">Cytoplasm</location>
    </subcellularLocation>
    <subcellularLocation>
        <location evidence="2">Nucleus</location>
    </subcellularLocation>
</comment>
<accession>Q5RJK8</accession>
<reference key="1">
    <citation type="journal article" date="2004" name="Genome Res.">
        <title>The status, quality, and expansion of the NIH full-length cDNA project: the Mammalian Gene Collection (MGC).</title>
        <authorList>
            <consortium name="The MGC Project Team"/>
        </authorList>
    </citation>
    <scope>NUCLEOTIDE SEQUENCE [LARGE SCALE MRNA]</scope>
    <source>
        <tissue>Brain</tissue>
    </source>
</reference>
<reference key="2">
    <citation type="journal article" date="2012" name="Nat. Commun.">
        <title>Quantitative maps of protein phosphorylation sites across 14 different rat organs and tissues.</title>
        <authorList>
            <person name="Lundby A."/>
            <person name="Secher A."/>
            <person name="Lage K."/>
            <person name="Nordsborg N.B."/>
            <person name="Dmytriyev A."/>
            <person name="Lundby C."/>
            <person name="Olsen J.V."/>
        </authorList>
    </citation>
    <scope>PHOSPHORYLATION [LARGE SCALE ANALYSIS] AT SER-41</scope>
    <scope>IDENTIFICATION BY MASS SPECTROMETRY [LARGE SCALE ANALYSIS]</scope>
</reference>
<evidence type="ECO:0000250" key="1"/>
<evidence type="ECO:0000250" key="2">
    <source>
        <dbReference type="UniProtKB" id="Q9BR61"/>
    </source>
</evidence>
<evidence type="ECO:0000255" key="3">
    <source>
        <dbReference type="PROSITE-ProRule" id="PRU00573"/>
    </source>
</evidence>
<evidence type="ECO:0000256" key="4">
    <source>
        <dbReference type="SAM" id="MobiDB-lite"/>
    </source>
</evidence>
<evidence type="ECO:0007744" key="5">
    <source>
    </source>
</evidence>
<keyword id="KW-0040">ANK repeat</keyword>
<keyword id="KW-0963">Cytoplasm</keyword>
<keyword id="KW-0446">Lipid-binding</keyword>
<keyword id="KW-0539">Nucleus</keyword>
<keyword id="KW-0597">Phosphoprotein</keyword>
<keyword id="KW-1185">Reference proteome</keyword>
<keyword id="KW-0677">Repeat</keyword>
<protein>
    <recommendedName>
        <fullName>Acyl-CoA-binding domain-containing protein 6</fullName>
    </recommendedName>
</protein>
<organism>
    <name type="scientific">Rattus norvegicus</name>
    <name type="common">Rat</name>
    <dbReference type="NCBI Taxonomy" id="10116"/>
    <lineage>
        <taxon>Eukaryota</taxon>
        <taxon>Metazoa</taxon>
        <taxon>Chordata</taxon>
        <taxon>Craniata</taxon>
        <taxon>Vertebrata</taxon>
        <taxon>Euteleostomi</taxon>
        <taxon>Mammalia</taxon>
        <taxon>Eutheria</taxon>
        <taxon>Euarchontoglires</taxon>
        <taxon>Glires</taxon>
        <taxon>Rodentia</taxon>
        <taxon>Myomorpha</taxon>
        <taxon>Muroidea</taxon>
        <taxon>Muridae</taxon>
        <taxon>Murinae</taxon>
        <taxon>Rattus</taxon>
    </lineage>
</organism>
<proteinExistence type="evidence at protein level"/>
<feature type="chain" id="PRO_0000232881" description="Acyl-CoA-binding domain-containing protein 6">
    <location>
        <begin position="1"/>
        <end position="282"/>
    </location>
</feature>
<feature type="domain" description="ACB" evidence="3">
    <location>
        <begin position="42"/>
        <end position="127"/>
    </location>
</feature>
<feature type="repeat" description="ANK 1">
    <location>
        <begin position="191"/>
        <end position="220"/>
    </location>
</feature>
<feature type="repeat" description="ANK 2">
    <location>
        <begin position="224"/>
        <end position="253"/>
    </location>
</feature>
<feature type="region of interest" description="Disordered" evidence="4">
    <location>
        <begin position="1"/>
        <end position="34"/>
    </location>
</feature>
<feature type="binding site" evidence="1">
    <location>
        <begin position="69"/>
        <end position="73"/>
    </location>
    <ligand>
        <name>an acyl-CoA</name>
        <dbReference type="ChEBI" id="CHEBI:58342"/>
    </ligand>
</feature>
<feature type="binding site" evidence="1">
    <location>
        <position position="95"/>
    </location>
    <ligand>
        <name>an acyl-CoA</name>
        <dbReference type="ChEBI" id="CHEBI:58342"/>
    </ligand>
</feature>
<feature type="binding site" evidence="1">
    <location>
        <position position="114"/>
    </location>
    <ligand>
        <name>an acyl-CoA</name>
        <dbReference type="ChEBI" id="CHEBI:58342"/>
    </ligand>
</feature>
<feature type="modified residue" description="Phosphoserine" evidence="5">
    <location>
        <position position="41"/>
    </location>
</feature>
<feature type="modified residue" description="Phosphoserine" evidence="2">
    <location>
        <position position="106"/>
    </location>
</feature>
<dbReference type="EMBL" id="BC086598">
    <property type="protein sequence ID" value="AAH86598.1"/>
    <property type="molecule type" value="mRNA"/>
</dbReference>
<dbReference type="RefSeq" id="NP_001011906.1">
    <property type="nucleotide sequence ID" value="NM_001011906.1"/>
</dbReference>
<dbReference type="SMR" id="Q5RJK8"/>
<dbReference type="FunCoup" id="Q5RJK8">
    <property type="interactions" value="2196"/>
</dbReference>
<dbReference type="STRING" id="10116.ENSRNOP00000004772"/>
<dbReference type="iPTMnet" id="Q5RJK8"/>
<dbReference type="PhosphoSitePlus" id="Q5RJK8"/>
<dbReference type="jPOST" id="Q5RJK8"/>
<dbReference type="PaxDb" id="10116-ENSRNOP00000004772"/>
<dbReference type="Ensembl" id="ENSRNOT00000004772.7">
    <property type="protein sequence ID" value="ENSRNOP00000004772.5"/>
    <property type="gene ID" value="ENSRNOG00000003550.7"/>
</dbReference>
<dbReference type="GeneID" id="289125"/>
<dbReference type="KEGG" id="rno:289125"/>
<dbReference type="UCSC" id="RGD:1305030">
    <property type="organism name" value="rat"/>
</dbReference>
<dbReference type="AGR" id="RGD:1305030"/>
<dbReference type="CTD" id="84320"/>
<dbReference type="RGD" id="1305030">
    <property type="gene designation" value="Acbd6"/>
</dbReference>
<dbReference type="eggNOG" id="KOG0817">
    <property type="taxonomic scope" value="Eukaryota"/>
</dbReference>
<dbReference type="GeneTree" id="ENSGT00940000157458"/>
<dbReference type="HOGENOM" id="CLU_050309_1_0_1"/>
<dbReference type="InParanoid" id="Q5RJK8"/>
<dbReference type="OMA" id="ARSKWQA"/>
<dbReference type="OrthoDB" id="81395at9989"/>
<dbReference type="PhylomeDB" id="Q5RJK8"/>
<dbReference type="TreeFam" id="TF329102"/>
<dbReference type="Reactome" id="R-RNO-77289">
    <property type="pathway name" value="Mitochondrial Fatty Acid Beta-Oxidation"/>
</dbReference>
<dbReference type="PRO" id="PR:Q5RJK8"/>
<dbReference type="Proteomes" id="UP000002494">
    <property type="component" value="Chromosome 13"/>
</dbReference>
<dbReference type="Bgee" id="ENSRNOG00000003550">
    <property type="expression patterns" value="Expressed in testis and 20 other cell types or tissues"/>
</dbReference>
<dbReference type="GO" id="GO:0005737">
    <property type="term" value="C:cytoplasm"/>
    <property type="evidence" value="ECO:0000250"/>
    <property type="project" value="UniProtKB"/>
</dbReference>
<dbReference type="GO" id="GO:0005634">
    <property type="term" value="C:nucleus"/>
    <property type="evidence" value="ECO:0000250"/>
    <property type="project" value="UniProtKB"/>
</dbReference>
<dbReference type="GO" id="GO:0000062">
    <property type="term" value="F:fatty-acyl-CoA binding"/>
    <property type="evidence" value="ECO:0000250"/>
    <property type="project" value="UniProtKB"/>
</dbReference>
<dbReference type="GO" id="GO:0008289">
    <property type="term" value="F:lipid binding"/>
    <property type="evidence" value="ECO:0000250"/>
    <property type="project" value="UniProtKB"/>
</dbReference>
<dbReference type="FunFam" id="1.20.80.10:FF:000022">
    <property type="entry name" value="acyl-CoA-binding domain-containing protein 6 isoform X1"/>
    <property type="match status" value="1"/>
</dbReference>
<dbReference type="Gene3D" id="1.20.80.10">
    <property type="match status" value="1"/>
</dbReference>
<dbReference type="Gene3D" id="1.25.40.20">
    <property type="entry name" value="Ankyrin repeat-containing domain"/>
    <property type="match status" value="1"/>
</dbReference>
<dbReference type="InterPro" id="IPR000582">
    <property type="entry name" value="Acyl-CoA-binding_protein"/>
</dbReference>
<dbReference type="InterPro" id="IPR035984">
    <property type="entry name" value="Acyl-CoA-binding_sf"/>
</dbReference>
<dbReference type="InterPro" id="IPR002110">
    <property type="entry name" value="Ankyrin_rpt"/>
</dbReference>
<dbReference type="InterPro" id="IPR036770">
    <property type="entry name" value="Ankyrin_rpt-contain_sf"/>
</dbReference>
<dbReference type="InterPro" id="IPR014352">
    <property type="entry name" value="FERM/acyl-CoA-bd_prot_sf"/>
</dbReference>
<dbReference type="PANTHER" id="PTHR24119">
    <property type="entry name" value="ACYL-COA-BINDING DOMAIN-CONTAINING PROTEIN 6"/>
    <property type="match status" value="1"/>
</dbReference>
<dbReference type="PANTHER" id="PTHR24119:SF0">
    <property type="entry name" value="ACYL-COA-BINDING DOMAIN-CONTAINING PROTEIN 6"/>
    <property type="match status" value="1"/>
</dbReference>
<dbReference type="Pfam" id="PF00887">
    <property type="entry name" value="ACBP"/>
    <property type="match status" value="1"/>
</dbReference>
<dbReference type="Pfam" id="PF12796">
    <property type="entry name" value="Ank_2"/>
    <property type="match status" value="1"/>
</dbReference>
<dbReference type="PRINTS" id="PR00689">
    <property type="entry name" value="ACOABINDINGP"/>
</dbReference>
<dbReference type="PRINTS" id="PR01415">
    <property type="entry name" value="ANKYRIN"/>
</dbReference>
<dbReference type="SMART" id="SM00248">
    <property type="entry name" value="ANK"/>
    <property type="match status" value="2"/>
</dbReference>
<dbReference type="SUPFAM" id="SSF47027">
    <property type="entry name" value="Acyl-CoA binding protein"/>
    <property type="match status" value="1"/>
</dbReference>
<dbReference type="SUPFAM" id="SSF48403">
    <property type="entry name" value="Ankyrin repeat"/>
    <property type="match status" value="1"/>
</dbReference>
<dbReference type="PROSITE" id="PS51228">
    <property type="entry name" value="ACB_2"/>
    <property type="match status" value="1"/>
</dbReference>
<dbReference type="PROSITE" id="PS50297">
    <property type="entry name" value="ANK_REP_REGION"/>
    <property type="match status" value="1"/>
</dbReference>
<dbReference type="PROSITE" id="PS50088">
    <property type="entry name" value="ANK_REPEAT"/>
    <property type="match status" value="2"/>
</dbReference>